<accession>B0X0K1</accession>
<name>KEN2_CULQU</name>
<proteinExistence type="inferred from homology"/>
<gene>
    <name evidence="1" type="primary">ken2</name>
    <name type="ORF">CPIJ012629</name>
</gene>
<organism>
    <name type="scientific">Culex quinquefasciatus</name>
    <name type="common">Southern house mosquito</name>
    <name type="synonym">Culex pungens</name>
    <dbReference type="NCBI Taxonomy" id="7176"/>
    <lineage>
        <taxon>Eukaryota</taxon>
        <taxon>Metazoa</taxon>
        <taxon>Ecdysozoa</taxon>
        <taxon>Arthropoda</taxon>
        <taxon>Hexapoda</taxon>
        <taxon>Insecta</taxon>
        <taxon>Pterygota</taxon>
        <taxon>Neoptera</taxon>
        <taxon>Endopterygota</taxon>
        <taxon>Diptera</taxon>
        <taxon>Nematocera</taxon>
        <taxon>Culicoidea</taxon>
        <taxon>Culicidae</taxon>
        <taxon>Culicinae</taxon>
        <taxon>Culicini</taxon>
        <taxon>Culex</taxon>
        <taxon>Culex</taxon>
    </lineage>
</organism>
<reference evidence="5" key="1">
    <citation type="submission" date="2007-03" db="EMBL/GenBank/DDBJ databases">
        <title>Annotation of Culex pipiens quinquefasciatus.</title>
        <authorList>
            <consortium name="The Broad Institute Genome Sequencing Platform"/>
            <person name="Atkinson P.W."/>
            <person name="Hemingway J."/>
            <person name="Christensen B.M."/>
            <person name="Higgs S."/>
            <person name="Kodira C.D."/>
            <person name="Hannick L.I."/>
            <person name="Megy K."/>
            <person name="O'Leary S.B."/>
            <person name="Pearson M."/>
            <person name="Haas B.J."/>
            <person name="Mauceli E."/>
            <person name="Wortman J.R."/>
            <person name="Lee N.H."/>
            <person name="Guigo R."/>
            <person name="Stanke M."/>
            <person name="Alvarado L."/>
            <person name="Amedeo P."/>
            <person name="Antoine C.H."/>
            <person name="Arensburger P."/>
            <person name="Bidwell S.L."/>
            <person name="Crawford M."/>
            <person name="Camaro F."/>
            <person name="Devon K."/>
            <person name="Engels R."/>
            <person name="Hammond M."/>
            <person name="Howarth C."/>
            <person name="Koehrsen M."/>
            <person name="Lawson D."/>
            <person name="Montgomery P."/>
            <person name="Nene V."/>
            <person name="Nusbaum C."/>
            <person name="Puiu D."/>
            <person name="Romero-Severson J."/>
            <person name="Severson D.W."/>
            <person name="Shumway M."/>
            <person name="Sisk P."/>
            <person name="Stolte C."/>
            <person name="Zeng Q."/>
            <person name="Eisenstadt E."/>
            <person name="Fraser-Liggett C.M."/>
            <person name="Strausberg R."/>
            <person name="Galagan J."/>
            <person name="Birren B."/>
            <person name="Collins F.H."/>
        </authorList>
    </citation>
    <scope>NUCLEOTIDE SEQUENCE [LARGE SCALE GENOMIC DNA]</scope>
    <source>
        <strain evidence="5">JHB</strain>
    </source>
</reference>
<dbReference type="EMBL" id="DS232239">
    <property type="protein sequence ID" value="EDS38162.1"/>
    <property type="molecule type" value="Genomic_DNA"/>
</dbReference>
<dbReference type="RefSeq" id="XP_001863173.1">
    <property type="nucleotide sequence ID" value="XM_001863138.1"/>
</dbReference>
<dbReference type="FunCoup" id="B0X0K1">
    <property type="interactions" value="521"/>
</dbReference>
<dbReference type="EnsemblMetazoa" id="CPIJ012629-RA">
    <property type="protein sequence ID" value="CPIJ012629-PA"/>
    <property type="gene ID" value="CPIJ012629"/>
</dbReference>
<dbReference type="KEGG" id="cqu:CpipJ_CPIJ012629"/>
<dbReference type="VEuPathDB" id="VectorBase:CPIJ012629"/>
<dbReference type="VEuPathDB" id="VectorBase:CQUJHB012418"/>
<dbReference type="eggNOG" id="KOG1721">
    <property type="taxonomic scope" value="Eukaryota"/>
</dbReference>
<dbReference type="HOGENOM" id="CLU_019233_0_0_1"/>
<dbReference type="InParanoid" id="B0X0K1"/>
<dbReference type="OMA" id="HIRIRMI"/>
<dbReference type="OrthoDB" id="8117402at2759"/>
<dbReference type="PhylomeDB" id="B0X0K1"/>
<dbReference type="Proteomes" id="UP000002320">
    <property type="component" value="Unassembled WGS sequence"/>
</dbReference>
<dbReference type="GO" id="GO:0005634">
    <property type="term" value="C:nucleus"/>
    <property type="evidence" value="ECO:0000250"/>
    <property type="project" value="UniProtKB"/>
</dbReference>
<dbReference type="GO" id="GO:0003677">
    <property type="term" value="F:DNA binding"/>
    <property type="evidence" value="ECO:0000250"/>
    <property type="project" value="UniProtKB"/>
</dbReference>
<dbReference type="GO" id="GO:0003700">
    <property type="term" value="F:DNA-binding transcription factor activity"/>
    <property type="evidence" value="ECO:0000250"/>
    <property type="project" value="UniProtKB"/>
</dbReference>
<dbReference type="GO" id="GO:0000978">
    <property type="term" value="F:RNA polymerase II cis-regulatory region sequence-specific DNA binding"/>
    <property type="evidence" value="ECO:0007669"/>
    <property type="project" value="TreeGrafter"/>
</dbReference>
<dbReference type="GO" id="GO:0008270">
    <property type="term" value="F:zinc ion binding"/>
    <property type="evidence" value="ECO:0007669"/>
    <property type="project" value="UniProtKB-KW"/>
</dbReference>
<dbReference type="GO" id="GO:0045497">
    <property type="term" value="P:female analia development"/>
    <property type="evidence" value="ECO:0000250"/>
    <property type="project" value="UniProtKB"/>
</dbReference>
<dbReference type="GO" id="GO:0030540">
    <property type="term" value="P:female genitalia development"/>
    <property type="evidence" value="ECO:0000250"/>
    <property type="project" value="UniProtKB"/>
</dbReference>
<dbReference type="GO" id="GO:0045496">
    <property type="term" value="P:male analia development"/>
    <property type="evidence" value="ECO:0000250"/>
    <property type="project" value="UniProtKB"/>
</dbReference>
<dbReference type="GO" id="GO:0030539">
    <property type="term" value="P:male genitalia development"/>
    <property type="evidence" value="ECO:0000250"/>
    <property type="project" value="UniProtKB"/>
</dbReference>
<dbReference type="GO" id="GO:0006355">
    <property type="term" value="P:regulation of DNA-templated transcription"/>
    <property type="evidence" value="ECO:0000250"/>
    <property type="project" value="UniProtKB"/>
</dbReference>
<dbReference type="GO" id="GO:0006357">
    <property type="term" value="P:regulation of transcription by RNA polymerase II"/>
    <property type="evidence" value="ECO:0007669"/>
    <property type="project" value="TreeGrafter"/>
</dbReference>
<dbReference type="CDD" id="cd18315">
    <property type="entry name" value="BTB_POZ_BAB-like"/>
    <property type="match status" value="1"/>
</dbReference>
<dbReference type="FunFam" id="3.30.160.60:FF:002059">
    <property type="entry name" value="transcription factor Ken"/>
    <property type="match status" value="1"/>
</dbReference>
<dbReference type="FunFam" id="3.30.710.10:FF:000389">
    <property type="entry name" value="Transcription factor Ken 2"/>
    <property type="match status" value="1"/>
</dbReference>
<dbReference type="Gene3D" id="3.30.160.60">
    <property type="entry name" value="Classic Zinc Finger"/>
    <property type="match status" value="2"/>
</dbReference>
<dbReference type="Gene3D" id="3.30.710.10">
    <property type="entry name" value="Potassium Channel Kv1.1, Chain A"/>
    <property type="match status" value="1"/>
</dbReference>
<dbReference type="InterPro" id="IPR000210">
    <property type="entry name" value="BTB/POZ_dom"/>
</dbReference>
<dbReference type="InterPro" id="IPR051497">
    <property type="entry name" value="Dev/Hematopoietic_TF"/>
</dbReference>
<dbReference type="InterPro" id="IPR011333">
    <property type="entry name" value="SKP1/BTB/POZ_sf"/>
</dbReference>
<dbReference type="InterPro" id="IPR036236">
    <property type="entry name" value="Znf_C2H2_sf"/>
</dbReference>
<dbReference type="InterPro" id="IPR013087">
    <property type="entry name" value="Znf_C2H2_type"/>
</dbReference>
<dbReference type="PANTHER" id="PTHR45993">
    <property type="entry name" value="B-CELL LYMPHOMA/LEUKEMIA 11"/>
    <property type="match status" value="1"/>
</dbReference>
<dbReference type="PANTHER" id="PTHR45993:SF7">
    <property type="entry name" value="TRANSCRIPTION FACTOR KEN"/>
    <property type="match status" value="1"/>
</dbReference>
<dbReference type="Pfam" id="PF00651">
    <property type="entry name" value="BTB"/>
    <property type="match status" value="1"/>
</dbReference>
<dbReference type="SMART" id="SM00225">
    <property type="entry name" value="BTB"/>
    <property type="match status" value="1"/>
</dbReference>
<dbReference type="SMART" id="SM00355">
    <property type="entry name" value="ZnF_C2H2"/>
    <property type="match status" value="2"/>
</dbReference>
<dbReference type="SUPFAM" id="SSF57667">
    <property type="entry name" value="beta-beta-alpha zinc fingers"/>
    <property type="match status" value="1"/>
</dbReference>
<dbReference type="SUPFAM" id="SSF54695">
    <property type="entry name" value="POZ domain"/>
    <property type="match status" value="1"/>
</dbReference>
<dbReference type="PROSITE" id="PS50097">
    <property type="entry name" value="BTB"/>
    <property type="match status" value="1"/>
</dbReference>
<dbReference type="PROSITE" id="PS00028">
    <property type="entry name" value="ZINC_FINGER_C2H2_1"/>
    <property type="match status" value="2"/>
</dbReference>
<dbReference type="PROSITE" id="PS50157">
    <property type="entry name" value="ZINC_FINGER_C2H2_2"/>
    <property type="match status" value="1"/>
</dbReference>
<evidence type="ECO:0000250" key="1">
    <source>
        <dbReference type="UniProtKB" id="O77459"/>
    </source>
</evidence>
<evidence type="ECO:0000255" key="2">
    <source>
        <dbReference type="PROSITE-ProRule" id="PRU00037"/>
    </source>
</evidence>
<evidence type="ECO:0000255" key="3">
    <source>
        <dbReference type="PROSITE-ProRule" id="PRU00042"/>
    </source>
</evidence>
<evidence type="ECO:0000256" key="4">
    <source>
        <dbReference type="SAM" id="MobiDB-lite"/>
    </source>
</evidence>
<evidence type="ECO:0000312" key="5">
    <source>
        <dbReference type="EMBL" id="EDS38162.1"/>
    </source>
</evidence>
<keyword id="KW-0217">Developmental protein</keyword>
<keyword id="KW-0238">DNA-binding</keyword>
<keyword id="KW-0479">Metal-binding</keyword>
<keyword id="KW-0539">Nucleus</keyword>
<keyword id="KW-1185">Reference proteome</keyword>
<keyword id="KW-0677">Repeat</keyword>
<keyword id="KW-0678">Repressor</keyword>
<keyword id="KW-0804">Transcription</keyword>
<keyword id="KW-0805">Transcription regulation</keyword>
<keyword id="KW-0862">Zinc</keyword>
<keyword id="KW-0863">Zinc-finger</keyword>
<feature type="chain" id="PRO_0000355090" description="Transcription factor Ken 2">
    <location>
        <begin position="1"/>
        <end position="670"/>
    </location>
</feature>
<feature type="domain" description="BTB" evidence="2">
    <location>
        <begin position="108"/>
        <end position="176"/>
    </location>
</feature>
<feature type="zinc finger region" description="C2H2-type 1; degenerate" evidence="3">
    <location>
        <begin position="586"/>
        <end position="594"/>
    </location>
</feature>
<feature type="zinc finger region" description="C2H2-type 2" evidence="3">
    <location>
        <begin position="600"/>
        <end position="623"/>
    </location>
</feature>
<feature type="zinc finger region" description="C2H2-type 3" evidence="3">
    <location>
        <begin position="636"/>
        <end position="658"/>
    </location>
</feature>
<feature type="region of interest" description="Disordered" evidence="4">
    <location>
        <begin position="200"/>
        <end position="288"/>
    </location>
</feature>
<feature type="region of interest" description="Disordered" evidence="4">
    <location>
        <begin position="307"/>
        <end position="470"/>
    </location>
</feature>
<feature type="compositionally biased region" description="Polar residues" evidence="4">
    <location>
        <begin position="218"/>
        <end position="230"/>
    </location>
</feature>
<feature type="compositionally biased region" description="Basic residues" evidence="4">
    <location>
        <begin position="325"/>
        <end position="338"/>
    </location>
</feature>
<feature type="compositionally biased region" description="Gly residues" evidence="4">
    <location>
        <begin position="351"/>
        <end position="368"/>
    </location>
</feature>
<feature type="compositionally biased region" description="Gly residues" evidence="4">
    <location>
        <begin position="389"/>
        <end position="400"/>
    </location>
</feature>
<feature type="compositionally biased region" description="Acidic residues" evidence="4">
    <location>
        <begin position="407"/>
        <end position="419"/>
    </location>
</feature>
<feature type="compositionally biased region" description="Polar residues" evidence="4">
    <location>
        <begin position="451"/>
        <end position="464"/>
    </location>
</feature>
<comment type="function">
    <text evidence="1">Transcription factor required for terminalia development. Negative regulator of the JAK/STAT pathway: represses JAK/STAT-dependent expression of ventral veins lacking (vvl) in the posterior spiracles (By similarity).</text>
</comment>
<comment type="subcellular location">
    <subcellularLocation>
        <location evidence="1">Nucleus</location>
    </subcellularLocation>
</comment>
<protein>
    <recommendedName>
        <fullName evidence="1">Transcription factor Ken 2</fullName>
    </recommendedName>
</protein>
<sequence>MEVLKLCLLLTRKKQFEVELIPEKIGARRPWKLETSSTATEAVVSVVTYLEATSGNARDAKEAGIYIRVYGAGWMIPEFVRMLMLHYSKHGECILQEIGAAFRGEHATDLLLICDGKETVRAHKLVLAAASPLIRMILEETPVLDGVTTVYFPEVQVSYFRLLLDFLYSGQVYVRSVEEYHHLQDLLALLQIKASIWKNSDGSDAGEPRKSEPLVDINRNTEGITGSSVVHQHPSRRRRSKSQDSLSGDSASGGGGTGSQAGTPKKVSVKSERHSAGSSVDGDGDRDREENLEYLDEVEEAIIKSNNNHPLHPHQHHLVAGSGGHHLHHHHHHHHRQLHQISRHDGDDDAGGGSGNDGASEGGSGESGRAGSVAGESAGDRPTPTNLSSGGGGAGSGRRSGSGEPTEPAEDDEDYELDVEDRGGDGDEAAGEGETRSRRSDPSANRRRSSSDPVNLSIVKQQQDVDSDDANIDVETIGTATTKTLLPPRYLDPFRTKRKAAAYYIHPADAEALKPMDHEGLLHNSPDNYVVTPHRKRRPGFHNSPAQNPPFVPSYLDDLRARSKCFLSAPPTYLPEKYLSVLTRWNLKTHLRVHTGEKPFACRLCVAMFKQKAHLLKHLCSVHRNIINAPEAGGRYTCCFCSLVFETLQELVRHLSGHHNNLLLSKNLHE</sequence>